<accession>Q5AZ85</accession>
<accession>C8V0P1</accession>
<accession>Q1HFS3</accession>
<comment type="function">
    <text evidence="4">Pectinolytic enzymes consist of four classes of enzymes: pectin lyase, polygalacturonase, pectin methylesterase and rhamnogalacturonase. Degrades the rhamnogalacturonan I (RG-I) backbone of pectin. Active against linseed rhamnogalacturonan.</text>
</comment>
<comment type="catalytic activity">
    <reaction>
        <text>Endotype eliminative cleavage of L-alpha-rhamnopyranosyl-(1-&gt;4)-alpha-D-galactopyranosyluronic acid bonds of rhamnogalacturonan I domains in ramified hairy regions of pectin leaving L-rhamnopyranose at the reducing end and 4-deoxy-4,5-unsaturated D-galactopyranosyluronic acid at the non-reducing end.</text>
        <dbReference type="EC" id="4.2.2.23"/>
    </reaction>
</comment>
<comment type="subcellular location">
    <subcellularLocation>
        <location evidence="1">Secreted</location>
    </subcellularLocation>
</comment>
<comment type="similarity">
    <text evidence="5">Belongs to the polysaccharide lyase 4 family.</text>
</comment>
<comment type="sequence caution" evidence="5">
    <conflict type="erroneous gene model prediction">
        <sequence resource="EMBL-CDS" id="CBF69554"/>
    </conflict>
</comment>
<comment type="sequence caution" evidence="5">
    <conflict type="erroneous gene model prediction">
        <sequence resource="EMBL-CDS" id="EAA58417"/>
    </conflict>
</comment>
<gene>
    <name type="primary">rglB</name>
    <name type="ORF">AN6395</name>
</gene>
<reference key="1">
    <citation type="journal article" date="2006" name="Proc. Natl. Acad. Sci. U.S.A.">
        <title>Development and application of a suite of polysaccharide-degrading enzymes for analyzing plant cell walls.</title>
        <authorList>
            <person name="Bauer S."/>
            <person name="Vasu P."/>
            <person name="Persson S."/>
            <person name="Mort A.J."/>
            <person name="Somerville C.R."/>
        </authorList>
    </citation>
    <scope>NUCLEOTIDE SEQUENCE [MRNA]</scope>
    <scope>FUNCTION</scope>
    <source>
        <strain>FGSC A4 / ATCC 38163 / CBS 112.46 / NRRL 194 / M139</strain>
    </source>
</reference>
<reference key="2">
    <citation type="journal article" date="2005" name="Nature">
        <title>Sequencing of Aspergillus nidulans and comparative analysis with A. fumigatus and A. oryzae.</title>
        <authorList>
            <person name="Galagan J.E."/>
            <person name="Calvo S.E."/>
            <person name="Cuomo C."/>
            <person name="Ma L.-J."/>
            <person name="Wortman J.R."/>
            <person name="Batzoglou S."/>
            <person name="Lee S.-I."/>
            <person name="Bastuerkmen M."/>
            <person name="Spevak C.C."/>
            <person name="Clutterbuck J."/>
            <person name="Kapitonov V."/>
            <person name="Jurka J."/>
            <person name="Scazzocchio C."/>
            <person name="Farman M.L."/>
            <person name="Butler J."/>
            <person name="Purcell S."/>
            <person name="Harris S."/>
            <person name="Braus G.H."/>
            <person name="Draht O."/>
            <person name="Busch S."/>
            <person name="D'Enfert C."/>
            <person name="Bouchier C."/>
            <person name="Goldman G.H."/>
            <person name="Bell-Pedersen D."/>
            <person name="Griffiths-Jones S."/>
            <person name="Doonan J.H."/>
            <person name="Yu J."/>
            <person name="Vienken K."/>
            <person name="Pain A."/>
            <person name="Freitag M."/>
            <person name="Selker E.U."/>
            <person name="Archer D.B."/>
            <person name="Penalva M.A."/>
            <person name="Oakley B.R."/>
            <person name="Momany M."/>
            <person name="Tanaka T."/>
            <person name="Kumagai T."/>
            <person name="Asai K."/>
            <person name="Machida M."/>
            <person name="Nierman W.C."/>
            <person name="Denning D.W."/>
            <person name="Caddick M.X."/>
            <person name="Hynes M."/>
            <person name="Paoletti M."/>
            <person name="Fischer R."/>
            <person name="Miller B.L."/>
            <person name="Dyer P.S."/>
            <person name="Sachs M.S."/>
            <person name="Osmani S.A."/>
            <person name="Birren B.W."/>
        </authorList>
    </citation>
    <scope>NUCLEOTIDE SEQUENCE [LARGE SCALE GENOMIC DNA]</scope>
    <source>
        <strain>FGSC A4 / ATCC 38163 / CBS 112.46 / NRRL 194 / M139</strain>
    </source>
</reference>
<reference key="3">
    <citation type="journal article" date="2009" name="Fungal Genet. Biol.">
        <title>The 2008 update of the Aspergillus nidulans genome annotation: a community effort.</title>
        <authorList>
            <person name="Wortman J.R."/>
            <person name="Gilsenan J.M."/>
            <person name="Joardar V."/>
            <person name="Deegan J."/>
            <person name="Clutterbuck J."/>
            <person name="Andersen M.R."/>
            <person name="Archer D."/>
            <person name="Bencina M."/>
            <person name="Braus G."/>
            <person name="Coutinho P."/>
            <person name="von Dohren H."/>
            <person name="Doonan J."/>
            <person name="Driessen A.J."/>
            <person name="Durek P."/>
            <person name="Espeso E."/>
            <person name="Fekete E."/>
            <person name="Flipphi M."/>
            <person name="Estrada C.G."/>
            <person name="Geysens S."/>
            <person name="Goldman G."/>
            <person name="de Groot P.W."/>
            <person name="Hansen K."/>
            <person name="Harris S.D."/>
            <person name="Heinekamp T."/>
            <person name="Helmstaedt K."/>
            <person name="Henrissat B."/>
            <person name="Hofmann G."/>
            <person name="Homan T."/>
            <person name="Horio T."/>
            <person name="Horiuchi H."/>
            <person name="James S."/>
            <person name="Jones M."/>
            <person name="Karaffa L."/>
            <person name="Karanyi Z."/>
            <person name="Kato M."/>
            <person name="Keller N."/>
            <person name="Kelly D.E."/>
            <person name="Kiel J.A."/>
            <person name="Kim J.M."/>
            <person name="van der Klei I.J."/>
            <person name="Klis F.M."/>
            <person name="Kovalchuk A."/>
            <person name="Krasevec N."/>
            <person name="Kubicek C.P."/>
            <person name="Liu B."/>
            <person name="Maccabe A."/>
            <person name="Meyer V."/>
            <person name="Mirabito P."/>
            <person name="Miskei M."/>
            <person name="Mos M."/>
            <person name="Mullins J."/>
            <person name="Nelson D.R."/>
            <person name="Nielsen J."/>
            <person name="Oakley B.R."/>
            <person name="Osmani S.A."/>
            <person name="Pakula T."/>
            <person name="Paszewski A."/>
            <person name="Paulsen I."/>
            <person name="Pilsyk S."/>
            <person name="Pocsi I."/>
            <person name="Punt P.J."/>
            <person name="Ram A.F."/>
            <person name="Ren Q."/>
            <person name="Robellet X."/>
            <person name="Robson G."/>
            <person name="Seiboth B."/>
            <person name="van Solingen P."/>
            <person name="Specht T."/>
            <person name="Sun J."/>
            <person name="Taheri-Talesh N."/>
            <person name="Takeshita N."/>
            <person name="Ussery D."/>
            <person name="vanKuyk P.A."/>
            <person name="Visser H."/>
            <person name="van de Vondervoort P.J."/>
            <person name="de Vries R.P."/>
            <person name="Walton J."/>
            <person name="Xiang X."/>
            <person name="Xiong Y."/>
            <person name="Zeng A.P."/>
            <person name="Brandt B.W."/>
            <person name="Cornell M.J."/>
            <person name="van den Hondel C.A."/>
            <person name="Visser J."/>
            <person name="Oliver S.G."/>
            <person name="Turner G."/>
        </authorList>
    </citation>
    <scope>GENOME REANNOTATION</scope>
    <source>
        <strain>FGSC A4 / ATCC 38163 / CBS 112.46 / NRRL 194 / M139</strain>
    </source>
</reference>
<organism>
    <name type="scientific">Emericella nidulans (strain FGSC A4 / ATCC 38163 / CBS 112.46 / NRRL 194 / M139)</name>
    <name type="common">Aspergillus nidulans</name>
    <dbReference type="NCBI Taxonomy" id="227321"/>
    <lineage>
        <taxon>Eukaryota</taxon>
        <taxon>Fungi</taxon>
        <taxon>Dikarya</taxon>
        <taxon>Ascomycota</taxon>
        <taxon>Pezizomycotina</taxon>
        <taxon>Eurotiomycetes</taxon>
        <taxon>Eurotiomycetidae</taxon>
        <taxon>Eurotiales</taxon>
        <taxon>Aspergillaceae</taxon>
        <taxon>Aspergillus</taxon>
        <taxon>Aspergillus subgen. Nidulantes</taxon>
    </lineage>
</organism>
<protein>
    <recommendedName>
        <fullName>Rhamnogalacturonate lyase B</fullName>
        <ecNumber>4.2.2.23</ecNumber>
    </recommendedName>
</protein>
<proteinExistence type="evidence at transcript level"/>
<dbReference type="EC" id="4.2.2.23"/>
<dbReference type="EMBL" id="DQ490501">
    <property type="protein sequence ID" value="ABF50877.1"/>
    <property type="molecule type" value="mRNA"/>
</dbReference>
<dbReference type="EMBL" id="AACD01000108">
    <property type="protein sequence ID" value="EAA58417.1"/>
    <property type="status" value="ALT_SEQ"/>
    <property type="molecule type" value="Genomic_DNA"/>
</dbReference>
<dbReference type="EMBL" id="BN001301">
    <property type="protein sequence ID" value="CBF69554.1"/>
    <property type="status" value="ALT_SEQ"/>
    <property type="molecule type" value="Genomic_DNA"/>
</dbReference>
<dbReference type="RefSeq" id="XP_663999.1">
    <property type="nucleotide sequence ID" value="XM_658907.1"/>
</dbReference>
<dbReference type="SMR" id="Q5AZ85"/>
<dbReference type="STRING" id="227321.Q5AZ85"/>
<dbReference type="CAZy" id="PL4">
    <property type="family name" value="Polysaccharide Lyase Family 4"/>
</dbReference>
<dbReference type="GlyCosmos" id="Q5AZ85">
    <property type="glycosylation" value="7 sites, No reported glycans"/>
</dbReference>
<dbReference type="KEGG" id="ani:ANIA_06395"/>
<dbReference type="VEuPathDB" id="FungiDB:AN6395"/>
<dbReference type="eggNOG" id="ENOG502QQM5">
    <property type="taxonomic scope" value="Eukaryota"/>
</dbReference>
<dbReference type="HOGENOM" id="CLU_016624_0_0_1"/>
<dbReference type="InParanoid" id="Q5AZ85"/>
<dbReference type="OrthoDB" id="2130367at2759"/>
<dbReference type="Proteomes" id="UP000000560">
    <property type="component" value="Chromosome I"/>
</dbReference>
<dbReference type="GO" id="GO:0005576">
    <property type="term" value="C:extracellular region"/>
    <property type="evidence" value="ECO:0007669"/>
    <property type="project" value="UniProtKB-SubCell"/>
</dbReference>
<dbReference type="GO" id="GO:0030246">
    <property type="term" value="F:carbohydrate binding"/>
    <property type="evidence" value="ECO:0007669"/>
    <property type="project" value="InterPro"/>
</dbReference>
<dbReference type="GO" id="GO:0016837">
    <property type="term" value="F:carbon-oxygen lyase activity, acting on polysaccharides"/>
    <property type="evidence" value="ECO:0000314"/>
    <property type="project" value="UniProtKB"/>
</dbReference>
<dbReference type="GO" id="GO:0102210">
    <property type="term" value="F:rhamnogalacturonan endolyase activity"/>
    <property type="evidence" value="ECO:0007669"/>
    <property type="project" value="UniProtKB-EC"/>
</dbReference>
<dbReference type="GO" id="GO:0071555">
    <property type="term" value="P:cell wall organization"/>
    <property type="evidence" value="ECO:0007669"/>
    <property type="project" value="UniProtKB-KW"/>
</dbReference>
<dbReference type="GO" id="GO:0045490">
    <property type="term" value="P:pectin catabolic process"/>
    <property type="evidence" value="ECO:0000314"/>
    <property type="project" value="UniProtKB"/>
</dbReference>
<dbReference type="CDD" id="cd10317">
    <property type="entry name" value="RGL4_C"/>
    <property type="match status" value="1"/>
</dbReference>
<dbReference type="CDD" id="cd10316">
    <property type="entry name" value="RGL4_M"/>
    <property type="match status" value="1"/>
</dbReference>
<dbReference type="CDD" id="cd10320">
    <property type="entry name" value="RGL4_N"/>
    <property type="match status" value="1"/>
</dbReference>
<dbReference type="Gene3D" id="2.70.98.10">
    <property type="match status" value="1"/>
</dbReference>
<dbReference type="Gene3D" id="2.60.40.1120">
    <property type="entry name" value="Carboxypeptidase-like, regulatory domain"/>
    <property type="match status" value="1"/>
</dbReference>
<dbReference type="Gene3D" id="2.60.120.260">
    <property type="entry name" value="Galactose-binding domain-like"/>
    <property type="match status" value="1"/>
</dbReference>
<dbReference type="InterPro" id="IPR013784">
    <property type="entry name" value="Carb-bd-like_fold"/>
</dbReference>
<dbReference type="InterPro" id="IPR011013">
    <property type="entry name" value="Gal_mutarotase_sf_dom"/>
</dbReference>
<dbReference type="InterPro" id="IPR008979">
    <property type="entry name" value="Galactose-bd-like_sf"/>
</dbReference>
<dbReference type="InterPro" id="IPR014718">
    <property type="entry name" value="GH-type_carb-bd"/>
</dbReference>
<dbReference type="InterPro" id="IPR051850">
    <property type="entry name" value="Polysacch_Lyase_4"/>
</dbReference>
<dbReference type="InterPro" id="IPR029413">
    <property type="entry name" value="RG-lyase_II"/>
</dbReference>
<dbReference type="InterPro" id="IPR029411">
    <property type="entry name" value="RG-lyase_III"/>
</dbReference>
<dbReference type="PANTHER" id="PTHR32018:SF9">
    <property type="entry name" value="RHAMNOGALACTURONATE LYASE B"/>
    <property type="match status" value="1"/>
</dbReference>
<dbReference type="PANTHER" id="PTHR32018">
    <property type="entry name" value="RHAMNOGALACTURONATE LYASE FAMILY PROTEIN"/>
    <property type="match status" value="1"/>
</dbReference>
<dbReference type="Pfam" id="PF14683">
    <property type="entry name" value="CBM-like"/>
    <property type="match status" value="1"/>
</dbReference>
<dbReference type="Pfam" id="PF14686">
    <property type="entry name" value="fn3_3"/>
    <property type="match status" value="1"/>
</dbReference>
<dbReference type="SUPFAM" id="SSF74650">
    <property type="entry name" value="Galactose mutarotase-like"/>
    <property type="match status" value="1"/>
</dbReference>
<dbReference type="SUPFAM" id="SSF49785">
    <property type="entry name" value="Galactose-binding domain-like"/>
    <property type="match status" value="1"/>
</dbReference>
<dbReference type="SUPFAM" id="SSF49452">
    <property type="entry name" value="Starch-binding domain-like"/>
    <property type="match status" value="1"/>
</dbReference>
<sequence length="660" mass="73509">MRLGVCFSLAAAASVARAALTATENDTSIVLENDRLRATFDKGRGSIIDLYLDGQDFLGPQSGSTGIGPYLDCYCTPSGFYTAGSTNPVTELVQGTDSTGTKYAGIILNDTYTPTGQEFQQYWFLRDGETGFHMFSRLAYYNETTPFLRNLQELRTLFRPNTDLWTHLTSSDLQTAPLPSDEAIAEQIVVQDATWRLNNTPDDAYYQQFSEYFTKYTFSNHWRDNDVHGLYADGSTSDGTTYGAWLVMNTKDTYYGGPLHSDLTVDGIIYNYIVSNHHGEGTPNITNGFDRTFGPQFYLFNGGGSSSLEELRDEARSLASPSWNADFYDSIAKHVIGYVPSSQRGSVKGTIKLPKNAKSPIAVLTVDGHYFQDNSAVPSSHQYWADIDKNGRFSIDRVVAGKYRLTVYADGIFGDFTRDGIVVKARKSTSIKETWKPESAGTEIWRLGTPDKSSGEFRHGAARDPTHPRHPPEYLIYWGAYDWQSDFPGGIDYMIGESDPATDFNTVHWAVFGPTPDNPVAESNTTHDWRIRFDLSAKQLHARKTATLTIQLAGAKAASGNTDVYNASEPYANLPLRSYINEQEEPLTMVIGYDQSSSCIVRSAVSCYQVREKWEFPASWLKEGSNLLRLSLPTNGTNYESAVLPTSVYVQYDALRLELK</sequence>
<keyword id="KW-0119">Carbohydrate metabolism</keyword>
<keyword id="KW-0961">Cell wall biogenesis/degradation</keyword>
<keyword id="KW-0325">Glycoprotein</keyword>
<keyword id="KW-0456">Lyase</keyword>
<keyword id="KW-0624">Polysaccharide degradation</keyword>
<keyword id="KW-1185">Reference proteome</keyword>
<keyword id="KW-0964">Secreted</keyword>
<keyword id="KW-0732">Signal</keyword>
<name>RGLB_EMENI</name>
<evidence type="ECO:0000250" key="1"/>
<evidence type="ECO:0000255" key="2"/>
<evidence type="ECO:0000256" key="3">
    <source>
        <dbReference type="SAM" id="MobiDB-lite"/>
    </source>
</evidence>
<evidence type="ECO:0000269" key="4">
    <source>
    </source>
</evidence>
<evidence type="ECO:0000305" key="5"/>
<feature type="signal peptide" evidence="2">
    <location>
        <begin position="1"/>
        <end position="18"/>
    </location>
</feature>
<feature type="chain" id="PRO_0000394378" description="Rhamnogalacturonate lyase B">
    <location>
        <begin position="19"/>
        <end position="660"/>
    </location>
</feature>
<feature type="region of interest" description="Disordered" evidence="3">
    <location>
        <begin position="446"/>
        <end position="466"/>
    </location>
</feature>
<feature type="compositionally biased region" description="Basic and acidic residues" evidence="3">
    <location>
        <begin position="453"/>
        <end position="466"/>
    </location>
</feature>
<feature type="glycosylation site" description="N-linked (GlcNAc...) asparagine" evidence="2">
    <location>
        <position position="25"/>
    </location>
</feature>
<feature type="glycosylation site" description="N-linked (GlcNAc...) asparagine" evidence="2">
    <location>
        <position position="109"/>
    </location>
</feature>
<feature type="glycosylation site" description="N-linked (GlcNAc...) asparagine" evidence="2">
    <location>
        <position position="142"/>
    </location>
</feature>
<feature type="glycosylation site" description="N-linked (GlcNAc...) asparagine" evidence="2">
    <location>
        <position position="284"/>
    </location>
</feature>
<feature type="glycosylation site" description="N-linked (GlcNAc...) asparagine" evidence="2">
    <location>
        <position position="524"/>
    </location>
</feature>
<feature type="glycosylation site" description="N-linked (GlcNAc...) asparagine" evidence="2">
    <location>
        <position position="566"/>
    </location>
</feature>
<feature type="glycosylation site" description="N-linked (GlcNAc...) asparagine" evidence="2">
    <location>
        <position position="635"/>
    </location>
</feature>